<proteinExistence type="inferred from homology"/>
<sequence length="85" mass="9612">MGLLDFLKSKKNTAETAKNRLQIIIAQERNHRGGPDYLPLMQRELLEVIKKYVNIDADAVRVDLVKDGEHDVLDITVALPEDGDK</sequence>
<feature type="chain" id="PRO_0000298218" description="Cell division topological specificity factor">
    <location>
        <begin position="1"/>
        <end position="85"/>
    </location>
</feature>
<name>MINE_XANC8</name>
<protein>
    <recommendedName>
        <fullName evidence="1">Cell division topological specificity factor</fullName>
    </recommendedName>
</protein>
<keyword id="KW-0131">Cell cycle</keyword>
<keyword id="KW-0132">Cell division</keyword>
<accession>Q4US05</accession>
<organism>
    <name type="scientific">Xanthomonas campestris pv. campestris (strain 8004)</name>
    <dbReference type="NCBI Taxonomy" id="314565"/>
    <lineage>
        <taxon>Bacteria</taxon>
        <taxon>Pseudomonadati</taxon>
        <taxon>Pseudomonadota</taxon>
        <taxon>Gammaproteobacteria</taxon>
        <taxon>Lysobacterales</taxon>
        <taxon>Lysobacteraceae</taxon>
        <taxon>Xanthomonas</taxon>
    </lineage>
</organism>
<dbReference type="EMBL" id="CP000050">
    <property type="protein sequence ID" value="AAY50168.1"/>
    <property type="molecule type" value="Genomic_DNA"/>
</dbReference>
<dbReference type="RefSeq" id="WP_011036323.1">
    <property type="nucleotide sequence ID" value="NZ_CP155948.1"/>
</dbReference>
<dbReference type="SMR" id="Q4US05"/>
<dbReference type="GeneID" id="93986476"/>
<dbReference type="KEGG" id="xcb:XC_3123"/>
<dbReference type="HOGENOM" id="CLU_137929_2_1_6"/>
<dbReference type="Proteomes" id="UP000000420">
    <property type="component" value="Chromosome"/>
</dbReference>
<dbReference type="GO" id="GO:0051301">
    <property type="term" value="P:cell division"/>
    <property type="evidence" value="ECO:0007669"/>
    <property type="project" value="UniProtKB-KW"/>
</dbReference>
<dbReference type="GO" id="GO:0032955">
    <property type="term" value="P:regulation of division septum assembly"/>
    <property type="evidence" value="ECO:0007669"/>
    <property type="project" value="InterPro"/>
</dbReference>
<dbReference type="FunFam" id="3.30.1070.10:FF:000001">
    <property type="entry name" value="Cell division topological specificity factor"/>
    <property type="match status" value="1"/>
</dbReference>
<dbReference type="Gene3D" id="3.30.1070.10">
    <property type="entry name" value="Cell division topological specificity factor MinE"/>
    <property type="match status" value="1"/>
</dbReference>
<dbReference type="HAMAP" id="MF_00262">
    <property type="entry name" value="MinE"/>
    <property type="match status" value="1"/>
</dbReference>
<dbReference type="InterPro" id="IPR005527">
    <property type="entry name" value="MinE"/>
</dbReference>
<dbReference type="InterPro" id="IPR036707">
    <property type="entry name" value="MinE_sf"/>
</dbReference>
<dbReference type="NCBIfam" id="TIGR01215">
    <property type="entry name" value="minE"/>
    <property type="match status" value="1"/>
</dbReference>
<dbReference type="NCBIfam" id="NF001422">
    <property type="entry name" value="PRK00296.1"/>
    <property type="match status" value="1"/>
</dbReference>
<dbReference type="Pfam" id="PF03776">
    <property type="entry name" value="MinE"/>
    <property type="match status" value="1"/>
</dbReference>
<dbReference type="SUPFAM" id="SSF55229">
    <property type="entry name" value="Cell division protein MinE topological specificity domain"/>
    <property type="match status" value="1"/>
</dbReference>
<comment type="function">
    <text evidence="1">Prevents the cell division inhibition by proteins MinC and MinD at internal division sites while permitting inhibition at polar sites. This ensures cell division at the proper site by restricting the formation of a division septum at the midpoint of the long axis of the cell.</text>
</comment>
<comment type="similarity">
    <text evidence="1">Belongs to the MinE family.</text>
</comment>
<reference key="1">
    <citation type="journal article" date="2005" name="Genome Res.">
        <title>Comparative and functional genomic analyses of the pathogenicity of phytopathogen Xanthomonas campestris pv. campestris.</title>
        <authorList>
            <person name="Qian W."/>
            <person name="Jia Y."/>
            <person name="Ren S.-X."/>
            <person name="He Y.-Q."/>
            <person name="Feng J.-X."/>
            <person name="Lu L.-F."/>
            <person name="Sun Q."/>
            <person name="Ying G."/>
            <person name="Tang D.-J."/>
            <person name="Tang H."/>
            <person name="Wu W."/>
            <person name="Hao P."/>
            <person name="Wang L."/>
            <person name="Jiang B.-L."/>
            <person name="Zeng S."/>
            <person name="Gu W.-Y."/>
            <person name="Lu G."/>
            <person name="Rong L."/>
            <person name="Tian Y."/>
            <person name="Yao Z."/>
            <person name="Fu G."/>
            <person name="Chen B."/>
            <person name="Fang R."/>
            <person name="Qiang B."/>
            <person name="Chen Z."/>
            <person name="Zhao G.-P."/>
            <person name="Tang J.-L."/>
            <person name="He C."/>
        </authorList>
    </citation>
    <scope>NUCLEOTIDE SEQUENCE [LARGE SCALE GENOMIC DNA]</scope>
    <source>
        <strain>8004</strain>
    </source>
</reference>
<evidence type="ECO:0000255" key="1">
    <source>
        <dbReference type="HAMAP-Rule" id="MF_00262"/>
    </source>
</evidence>
<gene>
    <name evidence="1" type="primary">minE</name>
    <name type="ordered locus">XC_3123</name>
</gene>